<gene>
    <name evidence="1" type="primary">rpoB</name>
    <name type="ordered locus">XCC0888</name>
</gene>
<name>RPOB_XANCP</name>
<feature type="chain" id="PRO_0000047999" description="DNA-directed RNA polymerase subunit beta">
    <location>
        <begin position="1"/>
        <end position="1387"/>
    </location>
</feature>
<feature type="sequence conflict" description="In Ref. 2; AAL74153." evidence="2" ref="2">
    <original>F</original>
    <variation>V</variation>
    <location>
        <position position="155"/>
    </location>
</feature>
<feature type="sequence conflict" description="In Ref. 2; AAL74153." evidence="2" ref="2">
    <original>G</original>
    <variation>A</variation>
    <location>
        <position position="291"/>
    </location>
</feature>
<feature type="sequence conflict" description="In Ref. 2; AAL74153." evidence="2" ref="2">
    <original>G</original>
    <variation>A</variation>
    <location>
        <position position="344"/>
    </location>
</feature>
<feature type="sequence conflict" description="In Ref. 2; AAL74153." evidence="2" ref="2">
    <original>V</original>
    <variation>S</variation>
    <location>
        <position position="562"/>
    </location>
</feature>
<feature type="sequence conflict" description="In Ref. 2; AAL74153." evidence="2" ref="2">
    <original>KP</original>
    <variation>NA</variation>
    <location>
        <begin position="677"/>
        <end position="678"/>
    </location>
</feature>
<feature type="sequence conflict" description="In Ref. 2; AAL74153." evidence="2" ref="2">
    <original>A</original>
    <variation>P</variation>
    <location>
        <position position="696"/>
    </location>
</feature>
<feature type="sequence conflict" description="In Ref. 2; AAL74153." evidence="2" ref="2">
    <original>R</original>
    <variation>P</variation>
    <location>
        <position position="1073"/>
    </location>
</feature>
<feature type="sequence conflict" description="In Ref. 2; AAL74153." evidence="2" ref="2">
    <original>I</original>
    <variation>V</variation>
    <location>
        <position position="1105"/>
    </location>
</feature>
<feature type="sequence conflict" description="In Ref. 2; AAL74153." evidence="2" ref="2">
    <original>K</original>
    <variation>N</variation>
    <location>
        <position position="1110"/>
    </location>
</feature>
<feature type="sequence conflict" description="In Ref. 2; AAL74153." evidence="2" ref="2">
    <original>EL</original>
    <variation>DV</variation>
    <location>
        <begin position="1185"/>
        <end position="1186"/>
    </location>
</feature>
<feature type="sequence conflict" description="In Ref. 2; AAL74153." evidence="2" ref="2">
    <original>A</original>
    <variation>R</variation>
    <location>
        <position position="1326"/>
    </location>
</feature>
<dbReference type="EC" id="2.7.7.6" evidence="1"/>
<dbReference type="EMBL" id="AE008922">
    <property type="protein sequence ID" value="AAM40198.1"/>
    <property type="molecule type" value="Genomic_DNA"/>
</dbReference>
<dbReference type="EMBL" id="AF426390">
    <property type="protein sequence ID" value="AAL74153.1"/>
    <property type="status" value="ALT_INIT"/>
    <property type="molecule type" value="Genomic_DNA"/>
</dbReference>
<dbReference type="RefSeq" id="NP_636274.1">
    <property type="nucleotide sequence ID" value="NC_003902.1"/>
</dbReference>
<dbReference type="SMR" id="Q8PC56"/>
<dbReference type="STRING" id="190485.XCC0888"/>
<dbReference type="EnsemblBacteria" id="AAM40198">
    <property type="protein sequence ID" value="AAM40198"/>
    <property type="gene ID" value="XCC0888"/>
</dbReference>
<dbReference type="KEGG" id="xcc:XCC0888"/>
<dbReference type="PATRIC" id="fig|190485.4.peg.959"/>
<dbReference type="eggNOG" id="COG0085">
    <property type="taxonomic scope" value="Bacteria"/>
</dbReference>
<dbReference type="HOGENOM" id="CLU_000524_4_0_6"/>
<dbReference type="OrthoDB" id="9803954at2"/>
<dbReference type="BRENDA" id="2.7.7.6">
    <property type="organism ID" value="6708"/>
</dbReference>
<dbReference type="Proteomes" id="UP000001010">
    <property type="component" value="Chromosome"/>
</dbReference>
<dbReference type="GO" id="GO:0000428">
    <property type="term" value="C:DNA-directed RNA polymerase complex"/>
    <property type="evidence" value="ECO:0007669"/>
    <property type="project" value="UniProtKB-KW"/>
</dbReference>
<dbReference type="GO" id="GO:0003677">
    <property type="term" value="F:DNA binding"/>
    <property type="evidence" value="ECO:0007669"/>
    <property type="project" value="UniProtKB-UniRule"/>
</dbReference>
<dbReference type="GO" id="GO:0003899">
    <property type="term" value="F:DNA-directed RNA polymerase activity"/>
    <property type="evidence" value="ECO:0007669"/>
    <property type="project" value="UniProtKB-UniRule"/>
</dbReference>
<dbReference type="GO" id="GO:0032549">
    <property type="term" value="F:ribonucleoside binding"/>
    <property type="evidence" value="ECO:0007669"/>
    <property type="project" value="InterPro"/>
</dbReference>
<dbReference type="GO" id="GO:0006351">
    <property type="term" value="P:DNA-templated transcription"/>
    <property type="evidence" value="ECO:0007669"/>
    <property type="project" value="UniProtKB-UniRule"/>
</dbReference>
<dbReference type="CDD" id="cd00653">
    <property type="entry name" value="RNA_pol_B_RPB2"/>
    <property type="match status" value="1"/>
</dbReference>
<dbReference type="FunFam" id="2.40.50.100:FF:000006">
    <property type="entry name" value="DNA-directed RNA polymerase subunit beta"/>
    <property type="match status" value="1"/>
</dbReference>
<dbReference type="FunFam" id="2.40.50.150:FF:000001">
    <property type="entry name" value="DNA-directed RNA polymerase subunit beta"/>
    <property type="match status" value="1"/>
</dbReference>
<dbReference type="FunFam" id="3.90.1800.10:FF:000001">
    <property type="entry name" value="DNA-directed RNA polymerase subunit beta"/>
    <property type="match status" value="1"/>
</dbReference>
<dbReference type="Gene3D" id="2.40.50.100">
    <property type="match status" value="1"/>
</dbReference>
<dbReference type="Gene3D" id="2.40.50.150">
    <property type="match status" value="1"/>
</dbReference>
<dbReference type="Gene3D" id="3.90.1100.10">
    <property type="match status" value="2"/>
</dbReference>
<dbReference type="Gene3D" id="6.10.140.1670">
    <property type="match status" value="1"/>
</dbReference>
<dbReference type="Gene3D" id="2.30.150.10">
    <property type="entry name" value="DNA-directed RNA polymerase, beta subunit, external 1 domain"/>
    <property type="match status" value="1"/>
</dbReference>
<dbReference type="Gene3D" id="2.40.270.10">
    <property type="entry name" value="DNA-directed RNA polymerase, subunit 2, domain 6"/>
    <property type="match status" value="1"/>
</dbReference>
<dbReference type="Gene3D" id="3.90.1800.10">
    <property type="entry name" value="RNA polymerase alpha subunit dimerisation domain"/>
    <property type="match status" value="1"/>
</dbReference>
<dbReference type="Gene3D" id="3.90.1110.10">
    <property type="entry name" value="RNA polymerase Rpb2, domain 2"/>
    <property type="match status" value="1"/>
</dbReference>
<dbReference type="HAMAP" id="MF_01321">
    <property type="entry name" value="RNApol_bact_RpoB"/>
    <property type="match status" value="1"/>
</dbReference>
<dbReference type="InterPro" id="IPR042107">
    <property type="entry name" value="DNA-dir_RNA_pol_bsu_ext_1_sf"/>
</dbReference>
<dbReference type="InterPro" id="IPR019462">
    <property type="entry name" value="DNA-dir_RNA_pol_bsu_external_1"/>
</dbReference>
<dbReference type="InterPro" id="IPR015712">
    <property type="entry name" value="DNA-dir_RNA_pol_su2"/>
</dbReference>
<dbReference type="InterPro" id="IPR007120">
    <property type="entry name" value="DNA-dir_RNAP_su2_dom"/>
</dbReference>
<dbReference type="InterPro" id="IPR037033">
    <property type="entry name" value="DNA-dir_RNAP_su2_hyb_sf"/>
</dbReference>
<dbReference type="InterPro" id="IPR010243">
    <property type="entry name" value="RNA_pol_bsu_bac"/>
</dbReference>
<dbReference type="InterPro" id="IPR007121">
    <property type="entry name" value="RNA_pol_bsu_CS"/>
</dbReference>
<dbReference type="InterPro" id="IPR007644">
    <property type="entry name" value="RNA_pol_bsu_protrusion"/>
</dbReference>
<dbReference type="InterPro" id="IPR007642">
    <property type="entry name" value="RNA_pol_Rpb2_2"/>
</dbReference>
<dbReference type="InterPro" id="IPR037034">
    <property type="entry name" value="RNA_pol_Rpb2_2_sf"/>
</dbReference>
<dbReference type="InterPro" id="IPR007645">
    <property type="entry name" value="RNA_pol_Rpb2_3"/>
</dbReference>
<dbReference type="InterPro" id="IPR007641">
    <property type="entry name" value="RNA_pol_Rpb2_7"/>
</dbReference>
<dbReference type="InterPro" id="IPR014724">
    <property type="entry name" value="RNA_pol_RPB2_OB-fold"/>
</dbReference>
<dbReference type="NCBIfam" id="NF001616">
    <property type="entry name" value="PRK00405.1"/>
    <property type="match status" value="1"/>
</dbReference>
<dbReference type="NCBIfam" id="TIGR02013">
    <property type="entry name" value="rpoB"/>
    <property type="match status" value="1"/>
</dbReference>
<dbReference type="PANTHER" id="PTHR20856">
    <property type="entry name" value="DNA-DIRECTED RNA POLYMERASE I SUBUNIT 2"/>
    <property type="match status" value="1"/>
</dbReference>
<dbReference type="Pfam" id="PF04563">
    <property type="entry name" value="RNA_pol_Rpb2_1"/>
    <property type="match status" value="1"/>
</dbReference>
<dbReference type="Pfam" id="PF04561">
    <property type="entry name" value="RNA_pol_Rpb2_2"/>
    <property type="match status" value="3"/>
</dbReference>
<dbReference type="Pfam" id="PF04565">
    <property type="entry name" value="RNA_pol_Rpb2_3"/>
    <property type="match status" value="1"/>
</dbReference>
<dbReference type="Pfam" id="PF10385">
    <property type="entry name" value="RNA_pol_Rpb2_45"/>
    <property type="match status" value="1"/>
</dbReference>
<dbReference type="Pfam" id="PF00562">
    <property type="entry name" value="RNA_pol_Rpb2_6"/>
    <property type="match status" value="1"/>
</dbReference>
<dbReference type="Pfam" id="PF04560">
    <property type="entry name" value="RNA_pol_Rpb2_7"/>
    <property type="match status" value="1"/>
</dbReference>
<dbReference type="SUPFAM" id="SSF64484">
    <property type="entry name" value="beta and beta-prime subunits of DNA dependent RNA-polymerase"/>
    <property type="match status" value="1"/>
</dbReference>
<dbReference type="PROSITE" id="PS01166">
    <property type="entry name" value="RNA_POL_BETA"/>
    <property type="match status" value="1"/>
</dbReference>
<accession>Q8PC56</accession>
<accession>Q8RTJ8</accession>
<organism>
    <name type="scientific">Xanthomonas campestris pv. campestris (strain ATCC 33913 / DSM 3586 / NCPPB 528 / LMG 568 / P 25)</name>
    <dbReference type="NCBI Taxonomy" id="190485"/>
    <lineage>
        <taxon>Bacteria</taxon>
        <taxon>Pseudomonadati</taxon>
        <taxon>Pseudomonadota</taxon>
        <taxon>Gammaproteobacteria</taxon>
        <taxon>Lysobacterales</taxon>
        <taxon>Lysobacteraceae</taxon>
        <taxon>Xanthomonas</taxon>
    </lineage>
</organism>
<keyword id="KW-0240">DNA-directed RNA polymerase</keyword>
<keyword id="KW-0548">Nucleotidyltransferase</keyword>
<keyword id="KW-1185">Reference proteome</keyword>
<keyword id="KW-0804">Transcription</keyword>
<keyword id="KW-0808">Transferase</keyword>
<sequence length="1387" mass="154903">MEDLMTSYSFTEKKRIRKDFGKQRSILEVPFLLAIQVDSYREFLQEDVEPNKRKDLGLHAALKSVFPISSYSGNAALEYVGYKLGEPVFDERECRQRGMSYGAPLRVTVRLVIYDRESSTKAIKYVKEQEVYLGEIPLMTENGTFIVNGTERVIFSQLHRSPGVFFDHDRGKTHSSGKLLYSARIIPYRGSWLDFEFDPKDALFTRIDRRRKLPVSILLRALGYNNEEMLAEFFEINTFHINPDEGVQLELVPERLRGETLNFDLADGDKVIVEAGKRITARHVKQLEAAGVAALAVPDDYLVGRILSHDVVDGSTGELLANANDEISEDQLAAFRKAGVDAVGTLWVNDLDRGPYLSNTLRIDPTKTQLEALVEIYRMMRPGEPPTKEAAQNLFHNLFFTFERYDLSTVGRMKFNRRVGRKEVLGESVLYDKKYFAERNDEESKRLVAEHADTSDILEVIKVLTEIRNGRGVVDDIDHLGNRRVRSVGEMAENVFRVGLVRVERAVKERLSMAESEGLTPQELINAKPVAAAIKEFFGSSQLSQFMDQNNPLSEVTHKRRVSALGPGGLTRERAGFEVRDVHPTHYGRVCTIETPEGPNIGLINSLAVFARTNQYGFLETPYRKVLDGKVSDDVEYLSAIEENEYVIAQANALTDAKNMLTEQFVPCRFQGESLLKPPAEVHFMDVSPMQTVSVAAALVPFLEHDDANRALMGANMQRQAVPTLRSQKPLVGTGIERAVARDSGVTVNARRGGVIEQIDAARIVVKVNEAEIGGGTDAGVDIYNLIKYTRSNQNTCINQRPLVNVGDVIARGDVLADGPSTDIGELALGQNMLIAFMPWNGYNFEDSILLSERVVEEDRYTTIHIEELTCVARDTKLGPEEISADIPNVSEQALNRLDESGVVYIGAEVRAGDIMVGKVTPKGESQLTPEEKLLRAIFGEKASDVKDSSLRVPPGMDGTVIDVQVFTRDGIEKDKRARQIEESEIKRVKKDFDDQFRILEAAIYARLRSQIVGKVANGGPNLKKGDNVTDAYLDGLKKSDWFQLRMKDDDAADAIERAQKQIQAHEKEFEARFADKRGKITQGDDLAPGVLKMVKVFLAVKRRIQPGDKMAGRHGNKGVVSNVVPVEDMPYMATGEPVDIVLNPLGVPSRMNIGQILEVHLGWAAKGLGRKIQRMLEAQTAVSELRKFLDDIYNHDSAINAERVDLSQFSDEELLNLGKNLIDGVPMATPVFDGASEAEIKRMLELAELPQSGQTQLYDGRTGEAFDRKTTVGYMHYLKLNHLVDDKMHARSTGPYSLVTQQPLGGKAQFGGQRFGEMEVWALEAYGAAYTLQEMLTVKSDDVQGRNQMYKNIVDGEHEMVAGMPESFNVLVKEIRSLAINMELEE</sequence>
<evidence type="ECO:0000255" key="1">
    <source>
        <dbReference type="HAMAP-Rule" id="MF_01321"/>
    </source>
</evidence>
<evidence type="ECO:0000305" key="2"/>
<proteinExistence type="inferred from homology"/>
<protein>
    <recommendedName>
        <fullName evidence="1">DNA-directed RNA polymerase subunit beta</fullName>
        <shortName evidence="1">RNAP subunit beta</shortName>
        <ecNumber evidence="1">2.7.7.6</ecNumber>
    </recommendedName>
    <alternativeName>
        <fullName evidence="1">RNA polymerase subunit beta</fullName>
    </alternativeName>
    <alternativeName>
        <fullName evidence="1">Transcriptase subunit beta</fullName>
    </alternativeName>
</protein>
<reference key="1">
    <citation type="journal article" date="2002" name="Nature">
        <title>Comparison of the genomes of two Xanthomonas pathogens with differing host specificities.</title>
        <authorList>
            <person name="da Silva A.C.R."/>
            <person name="Ferro J.A."/>
            <person name="Reinach F.C."/>
            <person name="Farah C.S."/>
            <person name="Furlan L.R."/>
            <person name="Quaggio R.B."/>
            <person name="Monteiro-Vitorello C.B."/>
            <person name="Van Sluys M.A."/>
            <person name="Almeida N.F. Jr."/>
            <person name="Alves L.M.C."/>
            <person name="do Amaral A.M."/>
            <person name="Bertolini M.C."/>
            <person name="Camargo L.E.A."/>
            <person name="Camarotte G."/>
            <person name="Cannavan F."/>
            <person name="Cardozo J."/>
            <person name="Chambergo F."/>
            <person name="Ciapina L.P."/>
            <person name="Cicarelli R.M.B."/>
            <person name="Coutinho L.L."/>
            <person name="Cursino-Santos J.R."/>
            <person name="El-Dorry H."/>
            <person name="Faria J.B."/>
            <person name="Ferreira A.J.S."/>
            <person name="Ferreira R.C.C."/>
            <person name="Ferro M.I.T."/>
            <person name="Formighieri E.F."/>
            <person name="Franco M.C."/>
            <person name="Greggio C.C."/>
            <person name="Gruber A."/>
            <person name="Katsuyama A.M."/>
            <person name="Kishi L.T."/>
            <person name="Leite R.P."/>
            <person name="Lemos E.G.M."/>
            <person name="Lemos M.V.F."/>
            <person name="Locali E.C."/>
            <person name="Machado M.A."/>
            <person name="Madeira A.M.B.N."/>
            <person name="Martinez-Rossi N.M."/>
            <person name="Martins E.C."/>
            <person name="Meidanis J."/>
            <person name="Menck C.F.M."/>
            <person name="Miyaki C.Y."/>
            <person name="Moon D.H."/>
            <person name="Moreira L.M."/>
            <person name="Novo M.T.M."/>
            <person name="Okura V.K."/>
            <person name="Oliveira M.C."/>
            <person name="Oliveira V.R."/>
            <person name="Pereira H.A."/>
            <person name="Rossi A."/>
            <person name="Sena J.A.D."/>
            <person name="Silva C."/>
            <person name="de Souza R.F."/>
            <person name="Spinola L.A.F."/>
            <person name="Takita M.A."/>
            <person name="Tamura R.E."/>
            <person name="Teixeira E.C."/>
            <person name="Tezza R.I.D."/>
            <person name="Trindade dos Santos M."/>
            <person name="Truffi D."/>
            <person name="Tsai S.M."/>
            <person name="White F.F."/>
            <person name="Setubal J.C."/>
            <person name="Kitajima J.P."/>
        </authorList>
    </citation>
    <scope>NUCLEOTIDE SEQUENCE [LARGE SCALE GENOMIC DNA]</scope>
    <source>
        <strain>ATCC 33913 / DSM 3586 / NCPPB 528 / LMG 568 / P 25</strain>
    </source>
</reference>
<reference key="2">
    <citation type="submission" date="2001-10" db="EMBL/GenBank/DDBJ databases">
        <authorList>
            <person name="Wang Z.-R."/>
            <person name="Wang T.-Y."/>
            <person name="Yang M.-T."/>
        </authorList>
    </citation>
    <scope>NUCLEOTIDE SEQUENCE [GENOMIC DNA]</scope>
</reference>
<comment type="function">
    <text evidence="1">DNA-dependent RNA polymerase catalyzes the transcription of DNA into RNA using the four ribonucleoside triphosphates as substrates.</text>
</comment>
<comment type="catalytic activity">
    <reaction evidence="1">
        <text>RNA(n) + a ribonucleoside 5'-triphosphate = RNA(n+1) + diphosphate</text>
        <dbReference type="Rhea" id="RHEA:21248"/>
        <dbReference type="Rhea" id="RHEA-COMP:14527"/>
        <dbReference type="Rhea" id="RHEA-COMP:17342"/>
        <dbReference type="ChEBI" id="CHEBI:33019"/>
        <dbReference type="ChEBI" id="CHEBI:61557"/>
        <dbReference type="ChEBI" id="CHEBI:140395"/>
        <dbReference type="EC" id="2.7.7.6"/>
    </reaction>
</comment>
<comment type="subunit">
    <text evidence="1">The RNAP catalytic core consists of 2 alpha, 1 beta, 1 beta' and 1 omega subunit. When a sigma factor is associated with the core the holoenzyme is formed, which can initiate transcription.</text>
</comment>
<comment type="similarity">
    <text evidence="1">Belongs to the RNA polymerase beta chain family.</text>
</comment>
<comment type="sequence caution" evidence="2">
    <conflict type="erroneous initiation">
        <sequence resource="EMBL-CDS" id="AAL74153"/>
    </conflict>
</comment>